<gene>
    <name evidence="1" type="primary">bioB</name>
    <name type="ordered locus">Dalk_0763</name>
</gene>
<name>BIOB_DESAL</name>
<sequence length="328" mass="35528">MDLKKCLDMAEAAKAGQLPEISDLEELACLPEQHVLDLLPAANAVRKHFFGDQVHLCCIVNGKSGKCREDCAFCAQSAYAKTSAPVYPLIDSEKMFQGASYARENGVHRYSLVASGGRLPKAEVRMVAEAFSRMGGDGVGYCASLGILDAQDFALLKEAGVDRYHHNLETAESHFKEICTTHAYGDRVKTIREAKKAGMSVCAGGLFGIGESDLQVLELGLALRDLEVDSVPVNFLIPIKGTRLEKSSDLSPLRCLKIISLLRFALGGKEIVICGGRESNLEELHPLVFYAGASGIMTGDYLTAPGRNPQKDHAMIRRLGLTALREGE</sequence>
<evidence type="ECO:0000255" key="1">
    <source>
        <dbReference type="HAMAP-Rule" id="MF_01694"/>
    </source>
</evidence>
<evidence type="ECO:0000255" key="2">
    <source>
        <dbReference type="PROSITE-ProRule" id="PRU01266"/>
    </source>
</evidence>
<protein>
    <recommendedName>
        <fullName evidence="1">Biotin synthase</fullName>
        <ecNumber evidence="1">2.8.1.6</ecNumber>
    </recommendedName>
</protein>
<proteinExistence type="inferred from homology"/>
<comment type="function">
    <text evidence="1">Catalyzes the conversion of dethiobiotin (DTB) to biotin by the insertion of a sulfur atom into dethiobiotin via a radical-based mechanism.</text>
</comment>
<comment type="catalytic activity">
    <reaction evidence="1">
        <text>(4R,5S)-dethiobiotin + (sulfur carrier)-SH + 2 reduced [2Fe-2S]-[ferredoxin] + 2 S-adenosyl-L-methionine = (sulfur carrier)-H + biotin + 2 5'-deoxyadenosine + 2 L-methionine + 2 oxidized [2Fe-2S]-[ferredoxin]</text>
        <dbReference type="Rhea" id="RHEA:22060"/>
        <dbReference type="Rhea" id="RHEA-COMP:10000"/>
        <dbReference type="Rhea" id="RHEA-COMP:10001"/>
        <dbReference type="Rhea" id="RHEA-COMP:14737"/>
        <dbReference type="Rhea" id="RHEA-COMP:14739"/>
        <dbReference type="ChEBI" id="CHEBI:17319"/>
        <dbReference type="ChEBI" id="CHEBI:29917"/>
        <dbReference type="ChEBI" id="CHEBI:33737"/>
        <dbReference type="ChEBI" id="CHEBI:33738"/>
        <dbReference type="ChEBI" id="CHEBI:57586"/>
        <dbReference type="ChEBI" id="CHEBI:57844"/>
        <dbReference type="ChEBI" id="CHEBI:59789"/>
        <dbReference type="ChEBI" id="CHEBI:64428"/>
        <dbReference type="ChEBI" id="CHEBI:149473"/>
        <dbReference type="EC" id="2.8.1.6"/>
    </reaction>
</comment>
<comment type="cofactor">
    <cofactor evidence="1">
        <name>[4Fe-4S] cluster</name>
        <dbReference type="ChEBI" id="CHEBI:49883"/>
    </cofactor>
    <text evidence="1">Binds 1 [4Fe-4S] cluster. The cluster is coordinated with 3 cysteines and an exchangeable S-adenosyl-L-methionine.</text>
</comment>
<comment type="cofactor">
    <cofactor evidence="1">
        <name>[2Fe-2S] cluster</name>
        <dbReference type="ChEBI" id="CHEBI:190135"/>
    </cofactor>
    <text evidence="1">Binds 1 [2Fe-2S] cluster. The cluster is coordinated with 3 cysteines and 1 arginine.</text>
</comment>
<comment type="pathway">
    <text evidence="1">Cofactor biosynthesis; biotin biosynthesis; biotin from 7,8-diaminononanoate: step 2/2.</text>
</comment>
<comment type="subunit">
    <text evidence="1">Homodimer.</text>
</comment>
<comment type="similarity">
    <text evidence="1">Belongs to the radical SAM superfamily. Biotin synthase family.</text>
</comment>
<reference key="1">
    <citation type="journal article" date="2012" name="Environ. Microbiol.">
        <title>The genome sequence of Desulfatibacillum alkenivorans AK-01: a blueprint for anaerobic alkane oxidation.</title>
        <authorList>
            <person name="Callaghan A.V."/>
            <person name="Morris B.E."/>
            <person name="Pereira I.A."/>
            <person name="McInerney M.J."/>
            <person name="Austin R.N."/>
            <person name="Groves J.T."/>
            <person name="Kukor J.J."/>
            <person name="Suflita J.M."/>
            <person name="Young L.Y."/>
            <person name="Zylstra G.J."/>
            <person name="Wawrik B."/>
        </authorList>
    </citation>
    <scope>NUCLEOTIDE SEQUENCE [LARGE SCALE GENOMIC DNA]</scope>
    <source>
        <strain>AK-01</strain>
    </source>
</reference>
<accession>B8FHQ1</accession>
<organism>
    <name type="scientific">Desulfatibacillum aliphaticivorans</name>
    <dbReference type="NCBI Taxonomy" id="218208"/>
    <lineage>
        <taxon>Bacteria</taxon>
        <taxon>Pseudomonadati</taxon>
        <taxon>Thermodesulfobacteriota</taxon>
        <taxon>Desulfobacteria</taxon>
        <taxon>Desulfobacterales</taxon>
        <taxon>Desulfatibacillaceae</taxon>
        <taxon>Desulfatibacillum</taxon>
    </lineage>
</organism>
<feature type="chain" id="PRO_0000381344" description="Biotin synthase">
    <location>
        <begin position="1"/>
        <end position="328"/>
    </location>
</feature>
<feature type="domain" description="Radical SAM core" evidence="2">
    <location>
        <begin position="50"/>
        <end position="277"/>
    </location>
</feature>
<feature type="binding site" evidence="1">
    <location>
        <position position="67"/>
    </location>
    <ligand>
        <name>[4Fe-4S] cluster</name>
        <dbReference type="ChEBI" id="CHEBI:49883"/>
        <note>4Fe-4S-S-AdoMet</note>
    </ligand>
</feature>
<feature type="binding site" evidence="1">
    <location>
        <position position="71"/>
    </location>
    <ligand>
        <name>[4Fe-4S] cluster</name>
        <dbReference type="ChEBI" id="CHEBI:49883"/>
        <note>4Fe-4S-S-AdoMet</note>
    </ligand>
</feature>
<feature type="binding site" evidence="1">
    <location>
        <position position="74"/>
    </location>
    <ligand>
        <name>[4Fe-4S] cluster</name>
        <dbReference type="ChEBI" id="CHEBI:49883"/>
        <note>4Fe-4S-S-AdoMet</note>
    </ligand>
</feature>
<feature type="binding site" evidence="1">
    <location>
        <position position="111"/>
    </location>
    <ligand>
        <name>[2Fe-2S] cluster</name>
        <dbReference type="ChEBI" id="CHEBI:190135"/>
    </ligand>
</feature>
<feature type="binding site" evidence="1">
    <location>
        <position position="142"/>
    </location>
    <ligand>
        <name>[2Fe-2S] cluster</name>
        <dbReference type="ChEBI" id="CHEBI:190135"/>
    </ligand>
</feature>
<feature type="binding site" evidence="1">
    <location>
        <position position="202"/>
    </location>
    <ligand>
        <name>[2Fe-2S] cluster</name>
        <dbReference type="ChEBI" id="CHEBI:190135"/>
    </ligand>
</feature>
<dbReference type="EC" id="2.8.1.6" evidence="1"/>
<dbReference type="EMBL" id="CP001322">
    <property type="protein sequence ID" value="ACL02468.1"/>
    <property type="molecule type" value="Genomic_DNA"/>
</dbReference>
<dbReference type="RefSeq" id="WP_012609907.1">
    <property type="nucleotide sequence ID" value="NC_011768.1"/>
</dbReference>
<dbReference type="SMR" id="B8FHQ1"/>
<dbReference type="KEGG" id="dal:Dalk_0763"/>
<dbReference type="eggNOG" id="COG0502">
    <property type="taxonomic scope" value="Bacteria"/>
</dbReference>
<dbReference type="HOGENOM" id="CLU_033172_2_1_7"/>
<dbReference type="UniPathway" id="UPA00078">
    <property type="reaction ID" value="UER00162"/>
</dbReference>
<dbReference type="Proteomes" id="UP000000739">
    <property type="component" value="Chromosome"/>
</dbReference>
<dbReference type="GO" id="GO:0051537">
    <property type="term" value="F:2 iron, 2 sulfur cluster binding"/>
    <property type="evidence" value="ECO:0007669"/>
    <property type="project" value="UniProtKB-KW"/>
</dbReference>
<dbReference type="GO" id="GO:0051539">
    <property type="term" value="F:4 iron, 4 sulfur cluster binding"/>
    <property type="evidence" value="ECO:0007669"/>
    <property type="project" value="UniProtKB-KW"/>
</dbReference>
<dbReference type="GO" id="GO:0004076">
    <property type="term" value="F:biotin synthase activity"/>
    <property type="evidence" value="ECO:0007669"/>
    <property type="project" value="UniProtKB-UniRule"/>
</dbReference>
<dbReference type="GO" id="GO:0005506">
    <property type="term" value="F:iron ion binding"/>
    <property type="evidence" value="ECO:0007669"/>
    <property type="project" value="UniProtKB-UniRule"/>
</dbReference>
<dbReference type="GO" id="GO:0009102">
    <property type="term" value="P:biotin biosynthetic process"/>
    <property type="evidence" value="ECO:0007669"/>
    <property type="project" value="UniProtKB-UniRule"/>
</dbReference>
<dbReference type="CDD" id="cd01335">
    <property type="entry name" value="Radical_SAM"/>
    <property type="match status" value="1"/>
</dbReference>
<dbReference type="Gene3D" id="3.20.20.70">
    <property type="entry name" value="Aldolase class I"/>
    <property type="match status" value="1"/>
</dbReference>
<dbReference type="HAMAP" id="MF_01694">
    <property type="entry name" value="BioB"/>
    <property type="match status" value="1"/>
</dbReference>
<dbReference type="InterPro" id="IPR013785">
    <property type="entry name" value="Aldolase_TIM"/>
</dbReference>
<dbReference type="InterPro" id="IPR010722">
    <property type="entry name" value="BATS_dom"/>
</dbReference>
<dbReference type="InterPro" id="IPR002684">
    <property type="entry name" value="Biotin_synth/BioAB"/>
</dbReference>
<dbReference type="InterPro" id="IPR024177">
    <property type="entry name" value="Biotin_synthase"/>
</dbReference>
<dbReference type="InterPro" id="IPR006638">
    <property type="entry name" value="Elp3/MiaA/NifB-like_rSAM"/>
</dbReference>
<dbReference type="InterPro" id="IPR007197">
    <property type="entry name" value="rSAM"/>
</dbReference>
<dbReference type="NCBIfam" id="TIGR00433">
    <property type="entry name" value="bioB"/>
    <property type="match status" value="1"/>
</dbReference>
<dbReference type="PANTHER" id="PTHR22976">
    <property type="entry name" value="BIOTIN SYNTHASE"/>
    <property type="match status" value="1"/>
</dbReference>
<dbReference type="PANTHER" id="PTHR22976:SF2">
    <property type="entry name" value="BIOTIN SYNTHASE, MITOCHONDRIAL"/>
    <property type="match status" value="1"/>
</dbReference>
<dbReference type="Pfam" id="PF06968">
    <property type="entry name" value="BATS"/>
    <property type="match status" value="1"/>
</dbReference>
<dbReference type="Pfam" id="PF04055">
    <property type="entry name" value="Radical_SAM"/>
    <property type="match status" value="1"/>
</dbReference>
<dbReference type="PIRSF" id="PIRSF001619">
    <property type="entry name" value="Biotin_synth"/>
    <property type="match status" value="1"/>
</dbReference>
<dbReference type="SFLD" id="SFLDG01278">
    <property type="entry name" value="biotin_synthase_like"/>
    <property type="match status" value="1"/>
</dbReference>
<dbReference type="SFLD" id="SFLDS00029">
    <property type="entry name" value="Radical_SAM"/>
    <property type="match status" value="1"/>
</dbReference>
<dbReference type="SMART" id="SM00876">
    <property type="entry name" value="BATS"/>
    <property type="match status" value="1"/>
</dbReference>
<dbReference type="SMART" id="SM00729">
    <property type="entry name" value="Elp3"/>
    <property type="match status" value="1"/>
</dbReference>
<dbReference type="SUPFAM" id="SSF102114">
    <property type="entry name" value="Radical SAM enzymes"/>
    <property type="match status" value="1"/>
</dbReference>
<dbReference type="PROSITE" id="PS51918">
    <property type="entry name" value="RADICAL_SAM"/>
    <property type="match status" value="1"/>
</dbReference>
<keyword id="KW-0001">2Fe-2S</keyword>
<keyword id="KW-0004">4Fe-4S</keyword>
<keyword id="KW-0093">Biotin biosynthesis</keyword>
<keyword id="KW-0408">Iron</keyword>
<keyword id="KW-0411">Iron-sulfur</keyword>
<keyword id="KW-0479">Metal-binding</keyword>
<keyword id="KW-1185">Reference proteome</keyword>
<keyword id="KW-0949">S-adenosyl-L-methionine</keyword>
<keyword id="KW-0808">Transferase</keyword>